<sequence>MASLRLFLLCLAGLVFVSEAGPAGAGESKCPLMVKVLDAVRGSPAVDVAVKVFKKTSEGSWEPFASGKTAESGELHGLTTDEKFVEGVYRVELDTKSYWKTLGISPFHEFADVVFTANDSGHRHYTIAALLSPYSYSTTAVVSNPQN</sequence>
<name>TTHY_MOUSE</name>
<dbReference type="EMBL" id="X03351">
    <property type="protein sequence ID" value="CAA27057.1"/>
    <property type="molecule type" value="mRNA"/>
</dbReference>
<dbReference type="EMBL" id="D00073">
    <property type="protein sequence ID" value="BAA00050.1"/>
    <property type="molecule type" value="Genomic_DNA"/>
</dbReference>
<dbReference type="EMBL" id="D89076">
    <property type="protein sequence ID" value="BAA13757.1"/>
    <property type="molecule type" value="mRNA"/>
</dbReference>
<dbReference type="EMBL" id="AK018701">
    <property type="protein sequence ID" value="BAB31352.1"/>
    <property type="molecule type" value="mRNA"/>
</dbReference>
<dbReference type="EMBL" id="BC024702">
    <property type="protein sequence ID" value="AAH24702.1"/>
    <property type="molecule type" value="mRNA"/>
</dbReference>
<dbReference type="CCDS" id="CCDS29085.1"/>
<dbReference type="PIR" id="A24132">
    <property type="entry name" value="VBMS"/>
</dbReference>
<dbReference type="RefSeq" id="NP_038725.1">
    <property type="nucleotide sequence ID" value="NM_013697.5"/>
</dbReference>
<dbReference type="RefSeq" id="XP_030106272.1">
    <property type="nucleotide sequence ID" value="XM_030250412.1"/>
</dbReference>
<dbReference type="PDB" id="2QPF">
    <property type="method" value="X-ray"/>
    <property type="resolution" value="2.05 A"/>
    <property type="chains" value="A/B/C/D/E/F/G/H=21-147"/>
</dbReference>
<dbReference type="PDBsum" id="2QPF"/>
<dbReference type="SMR" id="P07309"/>
<dbReference type="BioGRID" id="204369">
    <property type="interactions" value="20"/>
</dbReference>
<dbReference type="DIP" id="DIP-29726N"/>
<dbReference type="FunCoup" id="P07309">
    <property type="interactions" value="36"/>
</dbReference>
<dbReference type="IntAct" id="P07309">
    <property type="interactions" value="3"/>
</dbReference>
<dbReference type="MINT" id="P07309"/>
<dbReference type="STRING" id="10090.ENSMUSP00000074783"/>
<dbReference type="ChEMBL" id="CHEMBL5169111"/>
<dbReference type="GlyCosmos" id="P07309">
    <property type="glycosylation" value="1 site, No reported glycans"/>
</dbReference>
<dbReference type="GlyGen" id="P07309">
    <property type="glycosylation" value="2 sites, 1 N-linked glycan (1 site), 1 O-linked glycan (1 site)"/>
</dbReference>
<dbReference type="iPTMnet" id="P07309"/>
<dbReference type="PhosphoSitePlus" id="P07309"/>
<dbReference type="SwissPalm" id="P07309"/>
<dbReference type="CPTAC" id="non-CPTAC-3625"/>
<dbReference type="CPTAC" id="non-CPTAC-5622"/>
<dbReference type="jPOST" id="P07309"/>
<dbReference type="PaxDb" id="10090-ENSMUSP00000074783"/>
<dbReference type="PeptideAtlas" id="P07309"/>
<dbReference type="ProteomicsDB" id="298011"/>
<dbReference type="ABCD" id="P07309">
    <property type="antibodies" value="2 sequenced antibodies"/>
</dbReference>
<dbReference type="Antibodypedia" id="650">
    <property type="antibodies" value="1389 antibodies from 46 providers"/>
</dbReference>
<dbReference type="DNASU" id="22139"/>
<dbReference type="Ensembl" id="ENSMUST00000075312.5">
    <property type="protein sequence ID" value="ENSMUSP00000074783.4"/>
    <property type="gene ID" value="ENSMUSG00000061808.5"/>
</dbReference>
<dbReference type="GeneID" id="22139"/>
<dbReference type="KEGG" id="mmu:22139"/>
<dbReference type="UCSC" id="uc008eet.2">
    <property type="organism name" value="mouse"/>
</dbReference>
<dbReference type="AGR" id="MGI:98865"/>
<dbReference type="CTD" id="7276"/>
<dbReference type="MGI" id="MGI:98865">
    <property type="gene designation" value="Ttr"/>
</dbReference>
<dbReference type="VEuPathDB" id="HostDB:ENSMUSG00000061808"/>
<dbReference type="eggNOG" id="KOG3006">
    <property type="taxonomic scope" value="Eukaryota"/>
</dbReference>
<dbReference type="GeneTree" id="ENSGT00940000153229"/>
<dbReference type="HOGENOM" id="CLU_115536_2_0_1"/>
<dbReference type="InParanoid" id="P07309"/>
<dbReference type="OMA" id="AMYKVEL"/>
<dbReference type="OrthoDB" id="10265230at2759"/>
<dbReference type="PhylomeDB" id="P07309"/>
<dbReference type="TreeFam" id="TF300210"/>
<dbReference type="Reactome" id="R-MMU-2453902">
    <property type="pathway name" value="The canonical retinoid cycle in rods (twilight vision)"/>
</dbReference>
<dbReference type="Reactome" id="R-MMU-6798695">
    <property type="pathway name" value="Neutrophil degranulation"/>
</dbReference>
<dbReference type="Reactome" id="R-MMU-975634">
    <property type="pathway name" value="Retinoid metabolism and transport"/>
</dbReference>
<dbReference type="BioGRID-ORCS" id="22139">
    <property type="hits" value="1 hit in 77 CRISPR screens"/>
</dbReference>
<dbReference type="ChiTaRS" id="Ttr">
    <property type="organism name" value="mouse"/>
</dbReference>
<dbReference type="EvolutionaryTrace" id="P07309"/>
<dbReference type="PRO" id="PR:P07309"/>
<dbReference type="Proteomes" id="UP000000589">
    <property type="component" value="Chromosome 18"/>
</dbReference>
<dbReference type="RNAct" id="P07309">
    <property type="molecule type" value="protein"/>
</dbReference>
<dbReference type="Bgee" id="ENSMUSG00000061808">
    <property type="expression patterns" value="Expressed in choroid plexus epithelium and 219 other cell types or tissues"/>
</dbReference>
<dbReference type="ExpressionAtlas" id="P07309">
    <property type="expression patterns" value="baseline and differential"/>
</dbReference>
<dbReference type="GO" id="GO:0005576">
    <property type="term" value="C:extracellular region"/>
    <property type="evidence" value="ECO:0000314"/>
    <property type="project" value="MGI"/>
</dbReference>
<dbReference type="GO" id="GO:0005615">
    <property type="term" value="C:extracellular space"/>
    <property type="evidence" value="ECO:0007669"/>
    <property type="project" value="Ensembl"/>
</dbReference>
<dbReference type="GO" id="GO:0032991">
    <property type="term" value="C:protein-containing complex"/>
    <property type="evidence" value="ECO:0007669"/>
    <property type="project" value="Ensembl"/>
</dbReference>
<dbReference type="GO" id="GO:0005179">
    <property type="term" value="F:hormone activity"/>
    <property type="evidence" value="ECO:0007669"/>
    <property type="project" value="UniProtKB-KW"/>
</dbReference>
<dbReference type="GO" id="GO:0042562">
    <property type="term" value="F:hormone binding"/>
    <property type="evidence" value="ECO:0007669"/>
    <property type="project" value="Ensembl"/>
</dbReference>
<dbReference type="GO" id="GO:0042802">
    <property type="term" value="F:identical protein binding"/>
    <property type="evidence" value="ECO:0007669"/>
    <property type="project" value="Ensembl"/>
</dbReference>
<dbReference type="GO" id="GO:0140313">
    <property type="term" value="F:molecular sequestering activity"/>
    <property type="evidence" value="ECO:0000315"/>
    <property type="project" value="MGI"/>
</dbReference>
<dbReference type="GO" id="GO:0044877">
    <property type="term" value="F:protein-containing complex binding"/>
    <property type="evidence" value="ECO:0007669"/>
    <property type="project" value="Ensembl"/>
</dbReference>
<dbReference type="GO" id="GO:0003105">
    <property type="term" value="P:negative regulation of glomerular filtration"/>
    <property type="evidence" value="ECO:0000315"/>
    <property type="project" value="MGI"/>
</dbReference>
<dbReference type="GO" id="GO:0007603">
    <property type="term" value="P:phototransduction, visible light"/>
    <property type="evidence" value="ECO:0000315"/>
    <property type="project" value="MGI"/>
</dbReference>
<dbReference type="GO" id="GO:0001523">
    <property type="term" value="P:retinoid metabolic process"/>
    <property type="evidence" value="ECO:0000315"/>
    <property type="project" value="MGI"/>
</dbReference>
<dbReference type="CDD" id="cd05821">
    <property type="entry name" value="TLP_Transthyretin"/>
    <property type="match status" value="1"/>
</dbReference>
<dbReference type="FunFam" id="2.60.40.180:FF:000002">
    <property type="entry name" value="Transthyretin"/>
    <property type="match status" value="1"/>
</dbReference>
<dbReference type="Gene3D" id="2.60.40.180">
    <property type="entry name" value="Transthyretin/hydroxyisourate hydrolase domain"/>
    <property type="match status" value="1"/>
</dbReference>
<dbReference type="InterPro" id="IPR023418">
    <property type="entry name" value="Thyroxine_BS"/>
</dbReference>
<dbReference type="InterPro" id="IPR000895">
    <property type="entry name" value="Transthyretin/HIU_hydrolase"/>
</dbReference>
<dbReference type="InterPro" id="IPR023416">
    <property type="entry name" value="Transthyretin/HIU_hydrolase_d"/>
</dbReference>
<dbReference type="InterPro" id="IPR036817">
    <property type="entry name" value="Transthyretin/HIU_hydrolase_sf"/>
</dbReference>
<dbReference type="InterPro" id="IPR023419">
    <property type="entry name" value="Transthyretin_CS"/>
</dbReference>
<dbReference type="PANTHER" id="PTHR10395:SF12">
    <property type="entry name" value="TRANSTHYRETIN"/>
    <property type="match status" value="1"/>
</dbReference>
<dbReference type="PANTHER" id="PTHR10395">
    <property type="entry name" value="URICASE AND TRANSTHYRETIN-RELATED"/>
    <property type="match status" value="1"/>
</dbReference>
<dbReference type="Pfam" id="PF00576">
    <property type="entry name" value="Transthyretin"/>
    <property type="match status" value="1"/>
</dbReference>
<dbReference type="PRINTS" id="PR00189">
    <property type="entry name" value="TRNSTHYRETIN"/>
</dbReference>
<dbReference type="SMART" id="SM00095">
    <property type="entry name" value="TR_THY"/>
    <property type="match status" value="1"/>
</dbReference>
<dbReference type="SUPFAM" id="SSF49472">
    <property type="entry name" value="Transthyretin (synonym: prealbumin)"/>
    <property type="match status" value="1"/>
</dbReference>
<dbReference type="PROSITE" id="PS00768">
    <property type="entry name" value="TRANSTHYRETIN_1"/>
    <property type="match status" value="1"/>
</dbReference>
<dbReference type="PROSITE" id="PS00769">
    <property type="entry name" value="TRANSTHYRETIN_2"/>
    <property type="match status" value="1"/>
</dbReference>
<feature type="signal peptide">
    <location>
        <begin position="1"/>
        <end position="20"/>
    </location>
</feature>
<feature type="chain" id="PRO_0000035760" description="Transthyretin">
    <location>
        <begin position="21"/>
        <end position="147"/>
    </location>
</feature>
<feature type="binding site" evidence="2">
    <location>
        <position position="35"/>
    </location>
    <ligand>
        <name>L-thyroxine</name>
        <dbReference type="ChEBI" id="CHEBI:58448"/>
    </ligand>
</feature>
<feature type="binding site" evidence="2">
    <location>
        <position position="74"/>
    </location>
    <ligand>
        <name>L-thyroxine</name>
        <dbReference type="ChEBI" id="CHEBI:58448"/>
    </ligand>
</feature>
<feature type="binding site" evidence="2">
    <location>
        <position position="137"/>
    </location>
    <ligand>
        <name>L-thyroxine</name>
        <dbReference type="ChEBI" id="CHEBI:58448"/>
    </ligand>
</feature>
<feature type="modified residue" description="Sulfocysteine" evidence="2">
    <location>
        <position position="30"/>
    </location>
</feature>
<feature type="modified residue" description="4-carboxyglutamate" evidence="2">
    <location>
        <position position="62"/>
    </location>
</feature>
<feature type="modified residue" description="Phosphoserine" evidence="3">
    <location>
        <position position="72"/>
    </location>
</feature>
<feature type="glycosylation site" description="N-linked (GlcNAc...) asparagine" evidence="4">
    <location>
        <position position="118"/>
    </location>
</feature>
<feature type="strand" evidence="6">
    <location>
        <begin position="32"/>
        <end position="38"/>
    </location>
</feature>
<feature type="turn" evidence="6">
    <location>
        <begin position="39"/>
        <end position="42"/>
    </location>
</feature>
<feature type="strand" evidence="6">
    <location>
        <begin position="49"/>
        <end position="55"/>
    </location>
</feature>
<feature type="strand" evidence="6">
    <location>
        <begin position="61"/>
        <end position="68"/>
    </location>
</feature>
<feature type="strand" evidence="6">
    <location>
        <begin position="73"/>
        <end position="75"/>
    </location>
</feature>
<feature type="turn" evidence="6">
    <location>
        <begin position="81"/>
        <end position="83"/>
    </location>
</feature>
<feature type="strand" evidence="6">
    <location>
        <begin position="86"/>
        <end position="93"/>
    </location>
</feature>
<feature type="helix" evidence="6">
    <location>
        <begin position="95"/>
        <end position="101"/>
    </location>
</feature>
<feature type="strand" evidence="6">
    <location>
        <begin position="107"/>
        <end position="109"/>
    </location>
</feature>
<feature type="strand" evidence="6">
    <location>
        <begin position="111"/>
        <end position="118"/>
    </location>
</feature>
<feature type="strand" evidence="6">
    <location>
        <begin position="124"/>
        <end position="132"/>
    </location>
</feature>
<feature type="strand" evidence="6">
    <location>
        <begin position="135"/>
        <end position="143"/>
    </location>
</feature>
<gene>
    <name type="primary">Ttr</name>
</gene>
<organism>
    <name type="scientific">Mus musculus</name>
    <name type="common">Mouse</name>
    <dbReference type="NCBI Taxonomy" id="10090"/>
    <lineage>
        <taxon>Eukaryota</taxon>
        <taxon>Metazoa</taxon>
        <taxon>Chordata</taxon>
        <taxon>Craniata</taxon>
        <taxon>Vertebrata</taxon>
        <taxon>Euteleostomi</taxon>
        <taxon>Mammalia</taxon>
        <taxon>Eutheria</taxon>
        <taxon>Euarchontoglires</taxon>
        <taxon>Glires</taxon>
        <taxon>Rodentia</taxon>
        <taxon>Myomorpha</taxon>
        <taxon>Muroidea</taxon>
        <taxon>Muridae</taxon>
        <taxon>Murinae</taxon>
        <taxon>Mus</taxon>
        <taxon>Mus</taxon>
    </lineage>
</organism>
<comment type="function">
    <text>Thyroid hormone-binding protein. Probably transports thyroxine from the bloodstream to the brain.</text>
</comment>
<comment type="subunit">
    <text evidence="1">Homotetramer. Dimer of dimers. In the homotetramer, subunits assemble around a central channel that can accommodate two ligand molecules. Interacts with RBP4 (By similarity).</text>
</comment>
<comment type="subcellular location">
    <subcellularLocation>
        <location>Secreted</location>
    </subcellularLocation>
</comment>
<comment type="tissue specificity">
    <text>Detected in plasma (at protein level). Detected in liver.</text>
</comment>
<comment type="PTM">
    <text evidence="2">Sulfonation of the reactive cysteine Cys-30 enhances the stability of the native conformation of TTR, avoiding misassembly of the protein leading to amyloid formation.</text>
</comment>
<comment type="miscellaneous">
    <text>The mouse protein shows increased stability and much reduced propensity to form amyloid fibrils, compared to the human protein.</text>
</comment>
<comment type="similarity">
    <text evidence="5">Belongs to the transthyretin family.</text>
</comment>
<reference key="1">
    <citation type="journal article" date="1985" name="J. Biochem.">
        <title>Structural comparisons between mouse and human prealbumin.</title>
        <authorList>
            <person name="Wakasugi S."/>
            <person name="Maeda S."/>
            <person name="Shimada K."/>
            <person name="Nakashima H."/>
            <person name="Migita S."/>
        </authorList>
    </citation>
    <scope>NUCLEOTIDE SEQUENCE [MRNA]</scope>
    <scope>THYROID HORMONE-BINDING SITES LYS-35 AND GLU-74</scope>
    <source>
        <tissue>Liver</tissue>
    </source>
</reference>
<reference key="2">
    <citation type="journal article" date="1986" name="J. Biochem.">
        <title>Structure and expression of the mouse prealbumin gene.</title>
        <authorList>
            <person name="Wakasugi S."/>
            <person name="Maeda S."/>
            <person name="Shimada K."/>
        </authorList>
    </citation>
    <scope>NUCLEOTIDE SEQUENCE</scope>
</reference>
<reference key="3">
    <citation type="submission" date="1996-12" db="EMBL/GenBank/DDBJ databases">
        <authorList>
            <person name="Kita H."/>
            <person name="Kawamoto S."/>
            <person name="Okubo K."/>
            <person name="Matsubara K."/>
        </authorList>
    </citation>
    <scope>NUCLEOTIDE SEQUENCE</scope>
    <source>
        <strain>C57BL/6J</strain>
        <tissue>Choroid plexus</tissue>
    </source>
</reference>
<reference key="4">
    <citation type="journal article" date="2005" name="Science">
        <title>The transcriptional landscape of the mammalian genome.</title>
        <authorList>
            <person name="Carninci P."/>
            <person name="Kasukawa T."/>
            <person name="Katayama S."/>
            <person name="Gough J."/>
            <person name="Frith M.C."/>
            <person name="Maeda N."/>
            <person name="Oyama R."/>
            <person name="Ravasi T."/>
            <person name="Lenhard B."/>
            <person name="Wells C."/>
            <person name="Kodzius R."/>
            <person name="Shimokawa K."/>
            <person name="Bajic V.B."/>
            <person name="Brenner S.E."/>
            <person name="Batalov S."/>
            <person name="Forrest A.R."/>
            <person name="Zavolan M."/>
            <person name="Davis M.J."/>
            <person name="Wilming L.G."/>
            <person name="Aidinis V."/>
            <person name="Allen J.E."/>
            <person name="Ambesi-Impiombato A."/>
            <person name="Apweiler R."/>
            <person name="Aturaliya R.N."/>
            <person name="Bailey T.L."/>
            <person name="Bansal M."/>
            <person name="Baxter L."/>
            <person name="Beisel K.W."/>
            <person name="Bersano T."/>
            <person name="Bono H."/>
            <person name="Chalk A.M."/>
            <person name="Chiu K.P."/>
            <person name="Choudhary V."/>
            <person name="Christoffels A."/>
            <person name="Clutterbuck D.R."/>
            <person name="Crowe M.L."/>
            <person name="Dalla E."/>
            <person name="Dalrymple B.P."/>
            <person name="de Bono B."/>
            <person name="Della Gatta G."/>
            <person name="di Bernardo D."/>
            <person name="Down T."/>
            <person name="Engstrom P."/>
            <person name="Fagiolini M."/>
            <person name="Faulkner G."/>
            <person name="Fletcher C.F."/>
            <person name="Fukushima T."/>
            <person name="Furuno M."/>
            <person name="Futaki S."/>
            <person name="Gariboldi M."/>
            <person name="Georgii-Hemming P."/>
            <person name="Gingeras T.R."/>
            <person name="Gojobori T."/>
            <person name="Green R.E."/>
            <person name="Gustincich S."/>
            <person name="Harbers M."/>
            <person name="Hayashi Y."/>
            <person name="Hensch T.K."/>
            <person name="Hirokawa N."/>
            <person name="Hill D."/>
            <person name="Huminiecki L."/>
            <person name="Iacono M."/>
            <person name="Ikeo K."/>
            <person name="Iwama A."/>
            <person name="Ishikawa T."/>
            <person name="Jakt M."/>
            <person name="Kanapin A."/>
            <person name="Katoh M."/>
            <person name="Kawasawa Y."/>
            <person name="Kelso J."/>
            <person name="Kitamura H."/>
            <person name="Kitano H."/>
            <person name="Kollias G."/>
            <person name="Krishnan S.P."/>
            <person name="Kruger A."/>
            <person name="Kummerfeld S.K."/>
            <person name="Kurochkin I.V."/>
            <person name="Lareau L.F."/>
            <person name="Lazarevic D."/>
            <person name="Lipovich L."/>
            <person name="Liu J."/>
            <person name="Liuni S."/>
            <person name="McWilliam S."/>
            <person name="Madan Babu M."/>
            <person name="Madera M."/>
            <person name="Marchionni L."/>
            <person name="Matsuda H."/>
            <person name="Matsuzawa S."/>
            <person name="Miki H."/>
            <person name="Mignone F."/>
            <person name="Miyake S."/>
            <person name="Morris K."/>
            <person name="Mottagui-Tabar S."/>
            <person name="Mulder N."/>
            <person name="Nakano N."/>
            <person name="Nakauchi H."/>
            <person name="Ng P."/>
            <person name="Nilsson R."/>
            <person name="Nishiguchi S."/>
            <person name="Nishikawa S."/>
            <person name="Nori F."/>
            <person name="Ohara O."/>
            <person name="Okazaki Y."/>
            <person name="Orlando V."/>
            <person name="Pang K.C."/>
            <person name="Pavan W.J."/>
            <person name="Pavesi G."/>
            <person name="Pesole G."/>
            <person name="Petrovsky N."/>
            <person name="Piazza S."/>
            <person name="Reed J."/>
            <person name="Reid J.F."/>
            <person name="Ring B.Z."/>
            <person name="Ringwald M."/>
            <person name="Rost B."/>
            <person name="Ruan Y."/>
            <person name="Salzberg S.L."/>
            <person name="Sandelin A."/>
            <person name="Schneider C."/>
            <person name="Schoenbach C."/>
            <person name="Sekiguchi K."/>
            <person name="Semple C.A."/>
            <person name="Seno S."/>
            <person name="Sessa L."/>
            <person name="Sheng Y."/>
            <person name="Shibata Y."/>
            <person name="Shimada H."/>
            <person name="Shimada K."/>
            <person name="Silva D."/>
            <person name="Sinclair B."/>
            <person name="Sperling S."/>
            <person name="Stupka E."/>
            <person name="Sugiura K."/>
            <person name="Sultana R."/>
            <person name="Takenaka Y."/>
            <person name="Taki K."/>
            <person name="Tammoja K."/>
            <person name="Tan S.L."/>
            <person name="Tang S."/>
            <person name="Taylor M.S."/>
            <person name="Tegner J."/>
            <person name="Teichmann S.A."/>
            <person name="Ueda H.R."/>
            <person name="van Nimwegen E."/>
            <person name="Verardo R."/>
            <person name="Wei C.L."/>
            <person name="Yagi K."/>
            <person name="Yamanishi H."/>
            <person name="Zabarovsky E."/>
            <person name="Zhu S."/>
            <person name="Zimmer A."/>
            <person name="Hide W."/>
            <person name="Bult C."/>
            <person name="Grimmond S.M."/>
            <person name="Teasdale R.D."/>
            <person name="Liu E.T."/>
            <person name="Brusic V."/>
            <person name="Quackenbush J."/>
            <person name="Wahlestedt C."/>
            <person name="Mattick J.S."/>
            <person name="Hume D.A."/>
            <person name="Kai C."/>
            <person name="Sasaki D."/>
            <person name="Tomaru Y."/>
            <person name="Fukuda S."/>
            <person name="Kanamori-Katayama M."/>
            <person name="Suzuki M."/>
            <person name="Aoki J."/>
            <person name="Arakawa T."/>
            <person name="Iida J."/>
            <person name="Imamura K."/>
            <person name="Itoh M."/>
            <person name="Kato T."/>
            <person name="Kawaji H."/>
            <person name="Kawagashira N."/>
            <person name="Kawashima T."/>
            <person name="Kojima M."/>
            <person name="Kondo S."/>
            <person name="Konno H."/>
            <person name="Nakano K."/>
            <person name="Ninomiya N."/>
            <person name="Nishio T."/>
            <person name="Okada M."/>
            <person name="Plessy C."/>
            <person name="Shibata K."/>
            <person name="Shiraki T."/>
            <person name="Suzuki S."/>
            <person name="Tagami M."/>
            <person name="Waki K."/>
            <person name="Watahiki A."/>
            <person name="Okamura-Oho Y."/>
            <person name="Suzuki H."/>
            <person name="Kawai J."/>
            <person name="Hayashizaki Y."/>
        </authorList>
    </citation>
    <scope>NUCLEOTIDE SEQUENCE [LARGE SCALE MRNA]</scope>
    <source>
        <strain>C57BL/6J</strain>
        <tissue>Kidney</tissue>
    </source>
</reference>
<reference key="5">
    <citation type="journal article" date="2004" name="Genome Res.">
        <title>The status, quality, and expansion of the NIH full-length cDNA project: the Mammalian Gene Collection (MGC).</title>
        <authorList>
            <consortium name="The MGC Project Team"/>
        </authorList>
    </citation>
    <scope>NUCLEOTIDE SEQUENCE [LARGE SCALE MRNA]</scope>
    <source>
        <strain>FVB/N</strain>
        <tissue>Salivary gland</tissue>
    </source>
</reference>
<reference key="6">
    <citation type="journal article" date="2007" name="J. Proteome Res.">
        <title>Enhanced analysis of the mouse plasma proteome using cysteine-containing tryptic glycopeptides.</title>
        <authorList>
            <person name="Bernhard O.K."/>
            <person name="Kapp E.A."/>
            <person name="Simpson R.J."/>
        </authorList>
    </citation>
    <scope>GLYCOSYLATION [LARGE SCALE ANALYSIS] AT ASN-118</scope>
    <source>
        <strain>C57BL/6J</strain>
        <tissue>Plasma</tissue>
    </source>
</reference>
<reference key="7">
    <citation type="journal article" date="2010" name="Cell">
        <title>A tissue-specific atlas of mouse protein phosphorylation and expression.</title>
        <authorList>
            <person name="Huttlin E.L."/>
            <person name="Jedrychowski M.P."/>
            <person name="Elias J.E."/>
            <person name="Goswami T."/>
            <person name="Rad R."/>
            <person name="Beausoleil S.A."/>
            <person name="Villen J."/>
            <person name="Haas W."/>
            <person name="Sowa M.E."/>
            <person name="Gygi S.P."/>
        </authorList>
    </citation>
    <scope>IDENTIFICATION BY MASS SPECTROMETRY [LARGE SCALE ANALYSIS]</scope>
    <source>
        <tissue>Brain</tissue>
        <tissue>Brown adipose tissue</tissue>
        <tissue>Heart</tissue>
        <tissue>Kidney</tissue>
        <tissue>Liver</tissue>
        <tissue>Lung</tissue>
        <tissue>Pancreas</tissue>
        <tissue>Spleen</tissue>
        <tissue>Testis</tissue>
    </source>
</reference>
<reference key="8">
    <citation type="journal article" date="2008" name="J. Biol. Chem.">
        <title>Human-murine transthyretin heterotetramers are kinetically stable and non-amyloidogenic. A lesson in the generation of transgenic models of diseases involving oligomeric proteins.</title>
        <authorList>
            <person name="Reixach N."/>
            <person name="Foss T.R."/>
            <person name="Santelli E."/>
            <person name="Pascual J."/>
            <person name="Kelly J.W."/>
            <person name="Buxbaum J.N."/>
        </authorList>
    </citation>
    <scope>X-RAY CRYSTALLOGRAPHY (2.05 ANGSTROMS) OF 21-147</scope>
    <scope>INCREASED STABILITY OF THE MOUSE PROTEIN</scope>
    <scope>SUBUNIT</scope>
</reference>
<proteinExistence type="evidence at protein level"/>
<accession>P07309</accession>
<protein>
    <recommendedName>
        <fullName>Transthyretin</fullName>
    </recommendedName>
    <alternativeName>
        <fullName>Prealbumin</fullName>
    </alternativeName>
</protein>
<keyword id="KW-0002">3D-structure</keyword>
<keyword id="KW-0301">Gamma-carboxyglutamic acid</keyword>
<keyword id="KW-0325">Glycoprotein</keyword>
<keyword id="KW-0372">Hormone</keyword>
<keyword id="KW-0597">Phosphoprotein</keyword>
<keyword id="KW-1185">Reference proteome</keyword>
<keyword id="KW-0964">Secreted</keyword>
<keyword id="KW-0732">Signal</keyword>
<keyword id="KW-0765">Sulfation</keyword>
<keyword id="KW-0795">Thyroid hormone</keyword>
<keyword id="KW-0813">Transport</keyword>
<evidence type="ECO:0000250" key="1"/>
<evidence type="ECO:0000250" key="2">
    <source>
        <dbReference type="UniProtKB" id="P02766"/>
    </source>
</evidence>
<evidence type="ECO:0000250" key="3">
    <source>
        <dbReference type="UniProtKB" id="P02767"/>
    </source>
</evidence>
<evidence type="ECO:0000269" key="4">
    <source>
    </source>
</evidence>
<evidence type="ECO:0000305" key="5"/>
<evidence type="ECO:0007829" key="6">
    <source>
        <dbReference type="PDB" id="2QPF"/>
    </source>
</evidence>